<organism>
    <name type="scientific">Methanosphaera stadtmanae (strain ATCC 43021 / DSM 3091 / JCM 11832 / MCB-3)</name>
    <dbReference type="NCBI Taxonomy" id="339860"/>
    <lineage>
        <taxon>Archaea</taxon>
        <taxon>Methanobacteriati</taxon>
        <taxon>Methanobacteriota</taxon>
        <taxon>Methanomada group</taxon>
        <taxon>Methanobacteria</taxon>
        <taxon>Methanobacteriales</taxon>
        <taxon>Methanobacteriaceae</taxon>
        <taxon>Methanosphaera</taxon>
    </lineage>
</organism>
<accession>Q2NHL6</accession>
<name>DADD_METST</name>
<proteinExistence type="inferred from homology"/>
<evidence type="ECO:0000255" key="1">
    <source>
        <dbReference type="HAMAP-Rule" id="MF_01281"/>
    </source>
</evidence>
<keyword id="KW-0378">Hydrolase</keyword>
<keyword id="KW-0479">Metal-binding</keyword>
<keyword id="KW-1185">Reference proteome</keyword>
<keyword id="KW-0862">Zinc</keyword>
<reference key="1">
    <citation type="journal article" date="2006" name="J. Bacteriol.">
        <title>The genome sequence of Methanosphaera stadtmanae reveals why this human intestinal archaeon is restricted to methanol and H2 for methane formation and ATP synthesis.</title>
        <authorList>
            <person name="Fricke W.F."/>
            <person name="Seedorf H."/>
            <person name="Henne A."/>
            <person name="Kruer M."/>
            <person name="Liesegang H."/>
            <person name="Hedderich R."/>
            <person name="Gottschalk G."/>
            <person name="Thauer R.K."/>
        </authorList>
    </citation>
    <scope>NUCLEOTIDE SEQUENCE [LARGE SCALE GENOMIC DNA]</scope>
    <source>
        <strain>ATCC 43021 / DSM 3091 / JCM 11832 / MCB-3</strain>
    </source>
</reference>
<sequence>MSETTSILIKDTTILSDKIKKASILIVDNTIEEISNDLSVTDASKVIDGTNKITMPGLVNTHSHVAMTLLRGVGDDEELQTWLNDYIWPKEAKLDEKLVYAGSKLAMAEMIKTGTTTFNDMYFYMEETAKAVEESGIRGVLGYGMIDLFDDEKRKQEIKATKNLIKNSHNTANGRVQVAVAPHAPYTCSKELLSESKKLANKHNLKLHIHVSETQQEVNDLEKQRNQTPFEYLDSIDLLDENTIAAHGVWTTDNEMKLLKEKQVSISHNPSSNMKLASGIAPVSKYIKNDINVAIGTDGVSSNNNLDMFSEMKLTALLQKVNTMNAKTLPAQATFNMATENGARALGINTGSIKEGKLADIVLVNMNVPHMIPVRNPLSNIIYSALGSDVDTVICDGQLLLEDKKLLTINEEDAIYDAKLAAQQL</sequence>
<comment type="function">
    <text evidence="1">Catalyzes the deamination of three SAM-derived enzymatic products, namely 5'-deoxyadenosine, S-adenosyl-L-homocysteine, and 5'-methylthioadenosine, to produce the inosine analogs. Can also deaminate adenosine. The preferred substrate for this enzyme is 5'-deoxyadenosine, but all these substrates are efficiently deaminated. Likely functions in a S-adenosyl-L-methionine (SAM) recycling pathway from S-adenosyl-L-homocysteine (SAH) produced from SAM-dependent methylation reactions. May also be involved in the recycling of 5'-deoxyadenosine, whereupon the 5'-deoxyribose moiety of 5'-deoxyinosine is further metabolized to deoxyhexoses used for the biosynthesis of aromatic amino acids in methanogens.</text>
</comment>
<comment type="catalytic activity">
    <reaction evidence="1">
        <text>5'-deoxyadenosine + H2O + H(+) = 5'-deoxyinosine + NH4(+)</text>
        <dbReference type="Rhea" id="RHEA:42892"/>
        <dbReference type="ChEBI" id="CHEBI:15377"/>
        <dbReference type="ChEBI" id="CHEBI:15378"/>
        <dbReference type="ChEBI" id="CHEBI:17319"/>
        <dbReference type="ChEBI" id="CHEBI:28938"/>
        <dbReference type="ChEBI" id="CHEBI:82775"/>
        <dbReference type="EC" id="3.5.4.41"/>
    </reaction>
    <physiologicalReaction direction="left-to-right" evidence="1">
        <dbReference type="Rhea" id="RHEA:42893"/>
    </physiologicalReaction>
</comment>
<comment type="catalytic activity">
    <reaction evidence="1">
        <text>S-adenosyl-L-homocysteine + H2O + H(+) = S-inosyl-L-homocysteine + NH4(+)</text>
        <dbReference type="Rhea" id="RHEA:20716"/>
        <dbReference type="ChEBI" id="CHEBI:15377"/>
        <dbReference type="ChEBI" id="CHEBI:15378"/>
        <dbReference type="ChEBI" id="CHEBI:28938"/>
        <dbReference type="ChEBI" id="CHEBI:57856"/>
        <dbReference type="ChEBI" id="CHEBI:57985"/>
        <dbReference type="EC" id="3.5.4.28"/>
    </reaction>
    <physiologicalReaction direction="left-to-right" evidence="1">
        <dbReference type="Rhea" id="RHEA:20717"/>
    </physiologicalReaction>
</comment>
<comment type="catalytic activity">
    <reaction evidence="1">
        <text>S-methyl-5'-thioadenosine + H2O + H(+) = S-methyl-5'-thioinosine + NH4(+)</text>
        <dbReference type="Rhea" id="RHEA:25025"/>
        <dbReference type="ChEBI" id="CHEBI:15377"/>
        <dbReference type="ChEBI" id="CHEBI:15378"/>
        <dbReference type="ChEBI" id="CHEBI:17509"/>
        <dbReference type="ChEBI" id="CHEBI:28938"/>
        <dbReference type="ChEBI" id="CHEBI:48595"/>
        <dbReference type="EC" id="3.5.4.31"/>
    </reaction>
    <physiologicalReaction direction="left-to-right" evidence="1">
        <dbReference type="Rhea" id="RHEA:25026"/>
    </physiologicalReaction>
</comment>
<comment type="catalytic activity">
    <reaction evidence="1">
        <text>adenosine + H2O + H(+) = inosine + NH4(+)</text>
        <dbReference type="Rhea" id="RHEA:24408"/>
        <dbReference type="ChEBI" id="CHEBI:15377"/>
        <dbReference type="ChEBI" id="CHEBI:15378"/>
        <dbReference type="ChEBI" id="CHEBI:16335"/>
        <dbReference type="ChEBI" id="CHEBI:17596"/>
        <dbReference type="ChEBI" id="CHEBI:28938"/>
        <dbReference type="EC" id="3.5.4.4"/>
    </reaction>
    <physiologicalReaction direction="left-to-right" evidence="1">
        <dbReference type="Rhea" id="RHEA:24409"/>
    </physiologicalReaction>
</comment>
<comment type="cofactor">
    <cofactor evidence="1">
        <name>Zn(2+)</name>
        <dbReference type="ChEBI" id="CHEBI:29105"/>
    </cofactor>
    <text evidence="1">Binds 1 zinc ion per subunit.</text>
</comment>
<comment type="pathway">
    <text evidence="1">Amino-acid biosynthesis; S-adenosyl-L-methionine biosynthesis.</text>
</comment>
<comment type="subunit">
    <text evidence="1">Homotetramer.</text>
</comment>
<comment type="miscellaneous">
    <text evidence="1">SAH is a product of SAM methyltransferases and is known to be a feedback inhibitor of these enzymes. As a result of this inhibition, organisms have evolved efficient enzymes to metabolize SAH via different pathways. The pathway found in methanogens differs from the canonical pathway, it uses the deamination of S-adenosyl-L-homocysteine to form S-inosyl-L-homocysteine for the regeneration of SAM from S-adenosyl-L-homocysteine. 5'-deoxyadenosine is a radical SAM enzyme reaction product which strongly inhibits radical SAM enzymes. A pathway for removing this product must be present in methanogens where the MTA/SAH nucleosidase which normally metabolizes this compound is absent.</text>
</comment>
<comment type="similarity">
    <text evidence="1">Belongs to the metallo-dependent hydrolases superfamily. MTA/SAH deaminase family.</text>
</comment>
<dbReference type="EC" id="3.5.4.41" evidence="1"/>
<dbReference type="EC" id="3.5.4.31" evidence="1"/>
<dbReference type="EC" id="3.5.4.4" evidence="1"/>
<dbReference type="EC" id="3.5.4.28" evidence="1"/>
<dbReference type="EMBL" id="CP000102">
    <property type="protein sequence ID" value="ABC56617.1"/>
    <property type="molecule type" value="Genomic_DNA"/>
</dbReference>
<dbReference type="RefSeq" id="WP_011405816.1">
    <property type="nucleotide sequence ID" value="NC_007681.1"/>
</dbReference>
<dbReference type="SMR" id="Q2NHL6"/>
<dbReference type="STRING" id="339860.Msp_0200"/>
<dbReference type="KEGG" id="mst:Msp_0200"/>
<dbReference type="eggNOG" id="arCOG00695">
    <property type="taxonomic scope" value="Archaea"/>
</dbReference>
<dbReference type="HOGENOM" id="CLU_012358_2_1_2"/>
<dbReference type="OrthoDB" id="372084at2157"/>
<dbReference type="UniPathway" id="UPA00315"/>
<dbReference type="Proteomes" id="UP000001931">
    <property type="component" value="Chromosome"/>
</dbReference>
<dbReference type="GO" id="GO:0090613">
    <property type="term" value="F:5'-deoxyadenosine deaminase activity"/>
    <property type="evidence" value="ECO:0007669"/>
    <property type="project" value="UniProtKB-UniRule"/>
</dbReference>
<dbReference type="GO" id="GO:0090614">
    <property type="term" value="F:5'-methylthioadenosine deaminase activity"/>
    <property type="evidence" value="ECO:0007669"/>
    <property type="project" value="UniProtKB-EC"/>
</dbReference>
<dbReference type="GO" id="GO:0004000">
    <property type="term" value="F:adenosine deaminase activity"/>
    <property type="evidence" value="ECO:0007669"/>
    <property type="project" value="UniProtKB-UniRule"/>
</dbReference>
<dbReference type="GO" id="GO:0046872">
    <property type="term" value="F:metal ion binding"/>
    <property type="evidence" value="ECO:0007669"/>
    <property type="project" value="UniProtKB-KW"/>
</dbReference>
<dbReference type="GO" id="GO:0050270">
    <property type="term" value="F:S-adenosylhomocysteine deaminase activity"/>
    <property type="evidence" value="ECO:0007669"/>
    <property type="project" value="UniProtKB-EC"/>
</dbReference>
<dbReference type="GO" id="GO:0006556">
    <property type="term" value="P:S-adenosylmethionine biosynthetic process"/>
    <property type="evidence" value="ECO:0007669"/>
    <property type="project" value="UniProtKB-UniRule"/>
</dbReference>
<dbReference type="CDD" id="cd01298">
    <property type="entry name" value="ATZ_TRZ_like"/>
    <property type="match status" value="1"/>
</dbReference>
<dbReference type="FunFam" id="3.20.20.140:FF:000014">
    <property type="entry name" value="5-methylthioadenosine/S-adenosylhomocysteine deaminase"/>
    <property type="match status" value="1"/>
</dbReference>
<dbReference type="Gene3D" id="3.20.20.140">
    <property type="entry name" value="Metal-dependent hydrolases"/>
    <property type="match status" value="1"/>
</dbReference>
<dbReference type="Gene3D" id="2.30.40.10">
    <property type="entry name" value="Urease, subunit C, domain 1"/>
    <property type="match status" value="1"/>
</dbReference>
<dbReference type="HAMAP" id="MF_01281">
    <property type="entry name" value="MTA_SAH_deamin"/>
    <property type="match status" value="1"/>
</dbReference>
<dbReference type="InterPro" id="IPR006680">
    <property type="entry name" value="Amidohydro-rel"/>
</dbReference>
<dbReference type="InterPro" id="IPR023512">
    <property type="entry name" value="Deaminase_MtaD/DadD"/>
</dbReference>
<dbReference type="InterPro" id="IPR011059">
    <property type="entry name" value="Metal-dep_hydrolase_composite"/>
</dbReference>
<dbReference type="InterPro" id="IPR032466">
    <property type="entry name" value="Metal_Hydrolase"/>
</dbReference>
<dbReference type="InterPro" id="IPR050287">
    <property type="entry name" value="MTA/SAH_deaminase"/>
</dbReference>
<dbReference type="NCBIfam" id="NF004701">
    <property type="entry name" value="PRK06038.1"/>
    <property type="match status" value="1"/>
</dbReference>
<dbReference type="PANTHER" id="PTHR43794:SF11">
    <property type="entry name" value="AMIDOHYDROLASE-RELATED DOMAIN-CONTAINING PROTEIN"/>
    <property type="match status" value="1"/>
</dbReference>
<dbReference type="PANTHER" id="PTHR43794">
    <property type="entry name" value="AMINOHYDROLASE SSNA-RELATED"/>
    <property type="match status" value="1"/>
</dbReference>
<dbReference type="Pfam" id="PF01979">
    <property type="entry name" value="Amidohydro_1"/>
    <property type="match status" value="1"/>
</dbReference>
<dbReference type="SUPFAM" id="SSF51338">
    <property type="entry name" value="Composite domain of metallo-dependent hydrolases"/>
    <property type="match status" value="1"/>
</dbReference>
<dbReference type="SUPFAM" id="SSF51556">
    <property type="entry name" value="Metallo-dependent hydrolases"/>
    <property type="match status" value="1"/>
</dbReference>
<protein>
    <recommendedName>
        <fullName evidence="1">5'-deoxyadenosine deaminase</fullName>
        <shortName evidence="1">5'-dA deaminase</shortName>
        <ecNumber evidence="1">3.5.4.41</ecNumber>
    </recommendedName>
    <alternativeName>
        <fullName evidence="1">5'-methylthioadenosine deaminase</fullName>
        <shortName evidence="1">MTA deaminase</shortName>
        <ecNumber evidence="1">3.5.4.31</ecNumber>
    </alternativeName>
    <alternativeName>
        <fullName evidence="1">Adenosine deaminase</fullName>
        <ecNumber evidence="1">3.5.4.4</ecNumber>
    </alternativeName>
    <alternativeName>
        <fullName evidence="1">S-adenosylhomocysteine deaminase</fullName>
        <shortName evidence="1">SAH deaminase</shortName>
        <ecNumber evidence="1">3.5.4.28</ecNumber>
    </alternativeName>
</protein>
<feature type="chain" id="PRO_0000312482" description="5'-deoxyadenosine deaminase">
    <location>
        <begin position="1"/>
        <end position="425"/>
    </location>
</feature>
<feature type="binding site" evidence="1">
    <location>
        <position position="62"/>
    </location>
    <ligand>
        <name>Zn(2+)</name>
        <dbReference type="ChEBI" id="CHEBI:29105"/>
    </ligand>
</feature>
<feature type="binding site" evidence="1">
    <location>
        <position position="64"/>
    </location>
    <ligand>
        <name>Zn(2+)</name>
        <dbReference type="ChEBI" id="CHEBI:29105"/>
    </ligand>
</feature>
<feature type="binding site" evidence="1">
    <location>
        <position position="91"/>
    </location>
    <ligand>
        <name>substrate</name>
    </ligand>
</feature>
<feature type="binding site" evidence="1">
    <location>
        <position position="183"/>
    </location>
    <ligand>
        <name>substrate</name>
    </ligand>
</feature>
<feature type="binding site" evidence="1">
    <location>
        <position position="210"/>
    </location>
    <ligand>
        <name>Zn(2+)</name>
        <dbReference type="ChEBI" id="CHEBI:29105"/>
    </ligand>
</feature>
<feature type="binding site" evidence="1">
    <location>
        <position position="213"/>
    </location>
    <ligand>
        <name>substrate</name>
    </ligand>
</feature>
<feature type="binding site" evidence="1">
    <location>
        <position position="298"/>
    </location>
    <ligand>
        <name>substrate</name>
    </ligand>
</feature>
<feature type="binding site" evidence="1">
    <location>
        <position position="298"/>
    </location>
    <ligand>
        <name>Zn(2+)</name>
        <dbReference type="ChEBI" id="CHEBI:29105"/>
    </ligand>
</feature>
<gene>
    <name evidence="1" type="primary">dadD</name>
    <name type="ordered locus">Msp_0200</name>
</gene>